<protein>
    <recommendedName>
        <fullName>Zinc finger protein 143</fullName>
    </recommendedName>
    <alternativeName>
        <fullName>Selenocysteine tRNA gene transcription-activating factor</fullName>
    </alternativeName>
</protein>
<gene>
    <name type="primary">znf143</name>
    <name type="synonym">staf</name>
</gene>
<accession>Q58DZ6</accession>
<evidence type="ECO:0000250" key="1"/>
<evidence type="ECO:0000255" key="2">
    <source>
        <dbReference type="PROSITE-ProRule" id="PRU00042"/>
    </source>
</evidence>
<evidence type="ECO:0000256" key="3">
    <source>
        <dbReference type="SAM" id="MobiDB-lite"/>
    </source>
</evidence>
<evidence type="ECO:0000305" key="4"/>
<name>ZN143_XENTR</name>
<organism>
    <name type="scientific">Xenopus tropicalis</name>
    <name type="common">Western clawed frog</name>
    <name type="synonym">Silurana tropicalis</name>
    <dbReference type="NCBI Taxonomy" id="8364"/>
    <lineage>
        <taxon>Eukaryota</taxon>
        <taxon>Metazoa</taxon>
        <taxon>Chordata</taxon>
        <taxon>Craniata</taxon>
        <taxon>Vertebrata</taxon>
        <taxon>Euteleostomi</taxon>
        <taxon>Amphibia</taxon>
        <taxon>Batrachia</taxon>
        <taxon>Anura</taxon>
        <taxon>Pipoidea</taxon>
        <taxon>Pipidae</taxon>
        <taxon>Xenopodinae</taxon>
        <taxon>Xenopus</taxon>
        <taxon>Silurana</taxon>
    </lineage>
</organism>
<keyword id="KW-0010">Activator</keyword>
<keyword id="KW-0238">DNA-binding</keyword>
<keyword id="KW-0479">Metal-binding</keyword>
<keyword id="KW-0539">Nucleus</keyword>
<keyword id="KW-1185">Reference proteome</keyword>
<keyword id="KW-0677">Repeat</keyword>
<keyword id="KW-0804">Transcription</keyword>
<keyword id="KW-0805">Transcription regulation</keyword>
<keyword id="KW-0862">Zinc</keyword>
<keyword id="KW-0863">Zinc-finger</keyword>
<reference key="1">
    <citation type="submission" date="2005-03" db="EMBL/GenBank/DDBJ databases">
        <authorList>
            <consortium name="NIH - Xenopus Gene Collection (XGC) project"/>
        </authorList>
    </citation>
    <scope>NUCLEOTIDE SEQUENCE [LARGE SCALE MRNA]</scope>
</reference>
<dbReference type="EMBL" id="BC092134">
    <property type="protein sequence ID" value="AAH92134.1"/>
    <property type="status" value="ALT_INIT"/>
    <property type="molecule type" value="mRNA"/>
</dbReference>
<dbReference type="RefSeq" id="NP_001025654.1">
    <property type="nucleotide sequence ID" value="NM_001030483.1"/>
</dbReference>
<dbReference type="SMR" id="Q58DZ6"/>
<dbReference type="FunCoup" id="Q58DZ6">
    <property type="interactions" value="4001"/>
</dbReference>
<dbReference type="STRING" id="8364.ENSXETP00000001386"/>
<dbReference type="DNASU" id="595042"/>
<dbReference type="GeneID" id="595042"/>
<dbReference type="KEGG" id="xtr:595042"/>
<dbReference type="CTD" id="7702"/>
<dbReference type="HOGENOM" id="CLU_027168_0_0_1"/>
<dbReference type="InParanoid" id="Q58DZ6"/>
<dbReference type="OrthoDB" id="6077919at2759"/>
<dbReference type="Proteomes" id="UP000008143">
    <property type="component" value="Chromosome 4"/>
</dbReference>
<dbReference type="Bgee" id="ENSXETG00000024199">
    <property type="expression patterns" value="Expressed in 2-cell stage embryo and 13 other cell types or tissues"/>
</dbReference>
<dbReference type="GO" id="GO:0005634">
    <property type="term" value="C:nucleus"/>
    <property type="evidence" value="ECO:0007669"/>
    <property type="project" value="UniProtKB-SubCell"/>
</dbReference>
<dbReference type="GO" id="GO:0003677">
    <property type="term" value="F:DNA binding"/>
    <property type="evidence" value="ECO:0007669"/>
    <property type="project" value="UniProtKB-KW"/>
</dbReference>
<dbReference type="GO" id="GO:0008270">
    <property type="term" value="F:zinc ion binding"/>
    <property type="evidence" value="ECO:0007669"/>
    <property type="project" value="UniProtKB-KW"/>
</dbReference>
<dbReference type="FunFam" id="3.30.160.60:FF:000071">
    <property type="entry name" value="Putative zinc finger protein 143"/>
    <property type="match status" value="1"/>
</dbReference>
<dbReference type="FunFam" id="3.30.160.60:FF:000125">
    <property type="entry name" value="Putative zinc finger protein 143"/>
    <property type="match status" value="1"/>
</dbReference>
<dbReference type="FunFam" id="3.30.160.60:FF:000137">
    <property type="entry name" value="Putative zinc finger protein 143"/>
    <property type="match status" value="1"/>
</dbReference>
<dbReference type="FunFam" id="3.30.160.60:FF:000142">
    <property type="entry name" value="Putative zinc finger protein 143"/>
    <property type="match status" value="1"/>
</dbReference>
<dbReference type="FunFam" id="3.30.160.60:FF:000072">
    <property type="entry name" value="zinc finger protein 143 isoform X1"/>
    <property type="match status" value="1"/>
</dbReference>
<dbReference type="FunFam" id="3.30.160.60:FF:000236">
    <property type="entry name" value="zinc finger protein 143 isoform X1"/>
    <property type="match status" value="1"/>
</dbReference>
<dbReference type="FunFam" id="3.30.160.60:FF:000016">
    <property type="entry name" value="zinc finger protein 37 homolog"/>
    <property type="match status" value="1"/>
</dbReference>
<dbReference type="Gene3D" id="3.30.160.60">
    <property type="entry name" value="Classic Zinc Finger"/>
    <property type="match status" value="7"/>
</dbReference>
<dbReference type="InterPro" id="IPR036236">
    <property type="entry name" value="Znf_C2H2_sf"/>
</dbReference>
<dbReference type="InterPro" id="IPR013087">
    <property type="entry name" value="Znf_C2H2_type"/>
</dbReference>
<dbReference type="PANTHER" id="PTHR14003">
    <property type="entry name" value="TRANSCRIPTIONAL REPRESSOR PROTEIN YY"/>
    <property type="match status" value="1"/>
</dbReference>
<dbReference type="PANTHER" id="PTHR14003:SF23">
    <property type="entry name" value="ZINC FINGER PROTEIN 143"/>
    <property type="match status" value="1"/>
</dbReference>
<dbReference type="Pfam" id="PF00096">
    <property type="entry name" value="zf-C2H2"/>
    <property type="match status" value="7"/>
</dbReference>
<dbReference type="SMART" id="SM00355">
    <property type="entry name" value="ZnF_C2H2"/>
    <property type="match status" value="7"/>
</dbReference>
<dbReference type="SUPFAM" id="SSF57667">
    <property type="entry name" value="beta-beta-alpha zinc fingers"/>
    <property type="match status" value="3"/>
</dbReference>
<dbReference type="PROSITE" id="PS00028">
    <property type="entry name" value="ZINC_FINGER_C2H2_1"/>
    <property type="match status" value="7"/>
</dbReference>
<dbReference type="PROSITE" id="PS50157">
    <property type="entry name" value="ZINC_FINGER_C2H2_2"/>
    <property type="match status" value="7"/>
</dbReference>
<feature type="chain" id="PRO_0000370720" description="Zinc finger protein 143">
    <location>
        <begin position="1"/>
        <end position="567"/>
    </location>
</feature>
<feature type="zinc finger region" description="C2H2-type 1" evidence="2">
    <location>
        <begin position="230"/>
        <end position="254"/>
    </location>
</feature>
<feature type="zinc finger region" description="C2H2-type 2" evidence="2">
    <location>
        <begin position="260"/>
        <end position="284"/>
    </location>
</feature>
<feature type="zinc finger region" description="C2H2-type 3" evidence="2">
    <location>
        <begin position="290"/>
        <end position="314"/>
    </location>
</feature>
<feature type="zinc finger region" description="C2H2-type 4" evidence="2">
    <location>
        <begin position="320"/>
        <end position="344"/>
    </location>
</feature>
<feature type="zinc finger region" description="C2H2-type 5" evidence="2">
    <location>
        <begin position="350"/>
        <end position="374"/>
    </location>
</feature>
<feature type="zinc finger region" description="C2H2-type 6" evidence="2">
    <location>
        <begin position="380"/>
        <end position="404"/>
    </location>
</feature>
<feature type="zinc finger region" description="C2H2-type 7" evidence="2">
    <location>
        <begin position="410"/>
        <end position="433"/>
    </location>
</feature>
<feature type="region of interest" description="Disordered" evidence="3">
    <location>
        <begin position="506"/>
        <end position="525"/>
    </location>
</feature>
<feature type="compositionally biased region" description="Polar residues" evidence="3">
    <location>
        <begin position="506"/>
        <end position="520"/>
    </location>
</feature>
<comment type="function">
    <text evidence="1">Transcriptional activator. Activates the gene for selenocysteine tRNA (tRNAsec). Binds to the activator element (AE) motif of the selenocysteine tRNA gene promoter (By similarity).</text>
</comment>
<comment type="subcellular location">
    <subcellularLocation>
        <location evidence="4">Nucleus</location>
    </subcellularLocation>
</comment>
<comment type="similarity">
    <text evidence="4">Belongs to the GLI C2H2-type zinc-finger protein family.</text>
</comment>
<comment type="sequence caution" evidence="4">
    <conflict type="erroneous initiation">
        <sequence resource="EMBL-CDS" id="AAH92134"/>
    </conflict>
</comment>
<sequence length="567" mass="61601">MLLAQINRDSQAMAEFPGGGGEAQHVTLCLTEAVADGESMDTMEGMSLQAVTLADGSTAYIQHNTKDGKLMEGQVIQLEDGSAAYVQHVPKGDDLSLEDGQAVQLEDGTTAYIHHSSKDSYDQSSVQAVQLEDGTTAYIHHAVQVPQSDTILAIQADGTVAGLHTGEASIDPDTISALEQYAAKVSIEGGEGAGSNALINESESEKKMQIVLSHGSRIPAKPPQTNEKAFRCDYEGCGKLYTTAHHLKVHERSHTGDRPYQCDHGGCRKAFATGYGLKSHVRTHTGEKPYRCSEENCTKSFKTSGDLQKHVRTHTGERPFKCPFEGCGRSFTTSNIRKVHIRTHTGERPYYCSEPGCGRAFASATNYKNHVRIHTGEKPYVCTVPGCDKRFTEYSSLYKHHVVHTHSKPYNCNHCGKTYKQISTLAMHKRTAHNDTEPIEEEQESFFVPQPPDEVIKGSQITYVTGVDGEDGIQTTQSGQQLALIAQDGTSHVAIVAQDLSAFHTSATESGPQHSHNLGGSESRPVTLLATSNGRQIAVQIGEQQSLEEAIRIASRIQQGESPGIED</sequence>
<proteinExistence type="evidence at transcript level"/>